<comment type="function">
    <text evidence="1 5 6 7 8 9 11 13">Functions as a key mediator in apoptosis and inflammation (PubMed:32424362, PubMed:34678144). Promotes caspase-mediated apoptosis involving predominantly caspase-8 and also caspase-9 in a probable cell type-specific manner (By similarity). Involved in activation of the mitochondrial apoptotic pathway, promotes caspase-8-dependent proteolytic maturation of BID independently of FADD in certain cell types and also mediates mitochondrial translocation of BAX and activates BAX-dependent apoptosis coupled to activation of caspase-9, -2 and -3 (By similarity). Involved in innate immune response by acting as an integral adapter in the assembly of various inflammasomes (NLRP2, NLRP3, NLRP6 and AIM2) which recruit and activate caspase-1 leading to processing and secretion of pro-inflammatory cytokines (PubMed:15190255, PubMed:15507117, PubMed:21892172, PubMed:22555457, PubMed:32424362, PubMed:34678144). Caspase-1-dependent inflammation leads to macrophage pyroptosis, a form of cell death (By similarity). The function as activating adapter in different types of inflammasomes is mediated by the pyrin and CARD domains and their homotypic interactions (By similarity). Clustered PYCARD nucleates the formation of caspase-1 filaments through the interaction of their respective CARD domains, acting as a platform for of caspase-1 polymerization (By similarity). In the NLRC4 inflammasomes seems not be required but facilitates the processing of procaspase-1 (By similarity). In cooperation with NOD2 involved in an inflammasome activated by bacterial muramyl dipeptide leading to caspase-1 activation (By similarity). May be involved in RIGI-triggered pro-inflammatory responses and inflammasome activation (By similarity). In collaboration with AIM2 which detects cytosolic double-stranded DNA may also be involved in a caspase-1-independent cell death that involves caspase-8 (PubMed:22555457). In adaptive immunity may be involved in maturation of dendritic cells to stimulate T-cell immunity and in cytoskeletal rearrangements coupled to chemotaxis and antigen uptake may be involved in post-transcriptional regulation of the guanine nucleotide exchange factor DOCK2; the latter function is proposed to involve the nuclear form (By similarity). Also involved in transcriptional activation of cytokines and chemokines independent of the inflammasome; this function may involve AP-1, NF-kappa-B, MAPK and caspase-8 signaling pathways (By similarity). For regulation of NF-kappa-B activating and inhibiting functions have been reported (By similarity). Modulates NF-kappa-B induction at the level of the IKK complex by inhibiting kinase activity of CHUK and IKBK (By similarity). Proposed to compete with RIPK2 for association with CASP1 thereby down-regulating CASP1-mediated RIPK2-dependent NF-kappa-B activation and activating interleukin-1 beta processing (By similarity). Modulates host resistance to DNA virus infection, probably by inducing the cleavage of and inactivating CGAS in presence of cytoplasmic double-stranded DNA (PubMed:28314590).</text>
</comment>
<comment type="subunit">
    <text evidence="1 8 10 11 12 13">Self-associates; enforced oligomerization induces apoptosis, NF-kappa-B regulation and interleukin-1 beta secretion (By similarity). Homooligomers can form disk-like particles of approximately 12 nm diameter and approximately 1 nm height (By similarity). Component of several inflammasomes containing one pattern recognition receptor/sensor, such as NLRP2, NLRP3, NLRP6, NLRC4, AIM2, MEFV or NOD2, and probably NLRC4 or NLRP12 (PubMed:32424362, PubMed:34678144). Major component of the ASC pyroptosome, a 1-2 um supramolecular assembly (one per macrophage cell) which consists of oligomerized PYCARD dimers and CASP1 (By similarity). Interacts with CASP1 (precursor form); the interaction induces activation of CASP1 leading to the processing of interleukin-1 beta; PYCARD competes with RIPK2 for binding to CASP1 (By similarity). Interacts with NLRP3; the interaction requires the homooligomerization of NLRP3 (PubMed:30487600). Interacts with NLRP2, NLRC4, MEFV, CARD16, AIM2, NOD2, RIGI, RIPK2, PYDC1, PYDC2, NLRP10, CHUK, IKBKB and BAX (By similarity). Interacts with CASP8 (PubMed:22555457). Component of the AIM2 PANoptosome complex, a multiprotein complex that drives inflammatory cell death (PANoptosis) (PubMed:34471287).</text>
</comment>
<comment type="interaction">
    <interactant intactId="EBI-6253348">
        <id>Q9EPB4</id>
    </interactant>
    <interactant intactId="EBI-489700">
        <id>P29452</id>
        <label>Casp1</label>
    </interactant>
    <organismsDiffer>false</organismsDiffer>
    <experiments>6</experiments>
</comment>
<comment type="interaction">
    <interactant intactId="EBI-6253348">
        <id>Q9EPB4</id>
    </interactant>
    <interactant intactId="EBI-6910832">
        <id>Q8R4B8</id>
        <label>Nlrp3</label>
    </interactant>
    <organismsDiffer>false</organismsDiffer>
    <experiments>7</experiments>
</comment>
<comment type="subcellular location">
    <subcellularLocation>
        <location evidence="4 7 8">Cytoplasm</location>
    </subcellularLocation>
    <subcellularLocation>
        <location evidence="11 13">Inflammasome</location>
    </subcellularLocation>
    <subcellularLocation>
        <location evidence="1">Endoplasmic reticulum</location>
    </subcellularLocation>
    <subcellularLocation>
        <location evidence="1">Mitochondrion</location>
    </subcellularLocation>
    <subcellularLocation>
        <location evidence="1">Nucleus</location>
    </subcellularLocation>
    <text evidence="1 8">Upstream of caspase activation, a redistribution from the cytoplasm to the aggregates occurs. These appear as hollow, perinuclear spherical, ball-like structures. Upon NLRP3 inflammasome activation redistributes to the perinuclear space localizing to endoplasmic reticulum and mitochondria. Localized primarily to the nucleus in resting monocytes/macrophages and rapidly redistributed to the cytoplasm upon pathogen infection (By similarity). Localized to large cytoplasmic aggregate appearing as a speck containing AIM2, PYCARD, CASP8 and bacterial DNA after infection with Francisella tularensis (PubMed:22555457).</text>
</comment>
<comment type="tissue specificity">
    <text>Expressed in small intestine, colon, thymus, spleen, brain, heart, skeletal muscle, kidney, lung and liver.</text>
</comment>
<comment type="developmental stage">
    <text>Strongly expressed at 9.5 dpc in the telencephalon, thalamic areas of the diencephalon, heart and liver.</text>
</comment>
<comment type="domain">
    <text evidence="1">The CARD domain mediates interaction with CASP1 and NLRC4.</text>
</comment>
<comment type="domain">
    <text evidence="1">The pyrin domain mediates homotypic interactions with pyrin domains of proteins such as of NLRP3, PYDC1, PYDC2 and AIM2.</text>
</comment>
<comment type="PTM">
    <text evidence="1">Phosphorylated.</text>
</comment>
<comment type="PTM">
    <text evidence="1">'Lys-63'-linked polyubiquitination by TRAF3 is critical for speck formation and inflammasome activation (By similarity). 'Lys-63'-linked deubiquitinated by USP50; a crucial step for NLRP3-mediated inflammasome activation (By similarity). 'Lys-63'-linked polyubiquitination by PELI1 is also critical for speck formation and inflammasome activation (By similarity). Deubiquitinated by USP3 that cleaves 'Lys-48'-linked ubiquitin chains and strengthens its stability by blocking proteasomal degradation (By similarity).</text>
</comment>
<comment type="disruption phenotype">
    <text evidence="5 6 9">Increased resistance to endotoxic shock and severe defects in caspase-1 activation and interleukin-1 beta and interleukin-18 production in macrophages in response to several pro-inflammatory molecules (PubMed:15190255, PubMed:15507117). Mutants are resitant to vaccinia virus (VACV) but not vesicular somatitis virus (VSV) infection. They show lower viral loads in the lungs compared to wild type mice, they produce higher levels of type I IFN, IL6 and RSAD2/Viperin after VCAV INFECTION (PubMed:28314590).</text>
</comment>
<evidence type="ECO:0000250" key="1">
    <source>
        <dbReference type="UniProtKB" id="Q9ULZ3"/>
    </source>
</evidence>
<evidence type="ECO:0000255" key="2">
    <source>
        <dbReference type="PROSITE-ProRule" id="PRU00046"/>
    </source>
</evidence>
<evidence type="ECO:0000255" key="3">
    <source>
        <dbReference type="PROSITE-ProRule" id="PRU00061"/>
    </source>
</evidence>
<evidence type="ECO:0000269" key="4">
    <source>
    </source>
</evidence>
<evidence type="ECO:0000269" key="5">
    <source>
    </source>
</evidence>
<evidence type="ECO:0000269" key="6">
    <source>
    </source>
</evidence>
<evidence type="ECO:0000269" key="7">
    <source>
    </source>
</evidence>
<evidence type="ECO:0000269" key="8">
    <source>
    </source>
</evidence>
<evidence type="ECO:0000269" key="9">
    <source>
    </source>
</evidence>
<evidence type="ECO:0000269" key="10">
    <source>
    </source>
</evidence>
<evidence type="ECO:0000269" key="11">
    <source>
    </source>
</evidence>
<evidence type="ECO:0000269" key="12">
    <source>
    </source>
</evidence>
<evidence type="ECO:0000269" key="13">
    <source>
    </source>
</evidence>
<evidence type="ECO:0000305" key="14"/>
<evidence type="ECO:0007744" key="15">
    <source>
    </source>
</evidence>
<feature type="chain" id="PRO_0000064693" description="Apoptosis-associated speck-like protein containing a CARD">
    <location>
        <begin position="1"/>
        <end position="193"/>
    </location>
</feature>
<feature type="domain" description="Pyrin" evidence="3">
    <location>
        <begin position="1"/>
        <end position="91"/>
    </location>
</feature>
<feature type="domain" description="CARD" evidence="2">
    <location>
        <begin position="105"/>
        <end position="193"/>
    </location>
</feature>
<feature type="modified residue" description="Phosphoserine" evidence="15">
    <location>
        <position position="193"/>
    </location>
</feature>
<feature type="cross-link" description="Glycyl lysine isopeptide (Lys-Gly) (interchain with G-Cter in ubiquitin)" evidence="1">
    <location>
        <position position="55"/>
    </location>
</feature>
<feature type="cross-link" description="Glycyl lysine isopeptide (Lys-Gly) (interchain with G-Cter in ubiquitin)" evidence="1">
    <location>
        <position position="172"/>
    </location>
</feature>
<feature type="sequence conflict" description="In Ref. 3; BAB31341." evidence="14" ref="3">
    <original>K</original>
    <variation>E</variation>
    <location>
        <position position="159"/>
    </location>
</feature>
<accession>Q9EPB4</accession>
<accession>Q9D2W9</accession>
<proteinExistence type="evidence at protein level"/>
<protein>
    <recommendedName>
        <fullName>Apoptosis-associated speck-like protein containing a CARD</fullName>
        <shortName>mASC</shortName>
    </recommendedName>
    <alternativeName>
        <fullName>PYD and CARD domain-containing protein</fullName>
    </alternativeName>
</protein>
<sequence>MGRARDAILDALENLSGDELKKFKMKLLTVQLREGYGRIPRGALLQMDAIDLTDKLVSYYLESYGLELTMTVLRDMGLQELAEQLQTTKEESGAVAAAASVPAQSTARTGHFVDQHRQALIARVTEVDGVLDALHGSVLTEGQYQAVRAETTSQDKMRKLFSFVPSWNLTCKDSLLQALKEIHPYLVMDLEQS</sequence>
<gene>
    <name type="primary">Pycard</name>
    <name type="synonym">Asc</name>
</gene>
<name>ASC_MOUSE</name>
<dbReference type="EMBL" id="AB032249">
    <property type="protein sequence ID" value="BAB16609.1"/>
    <property type="molecule type" value="mRNA"/>
</dbReference>
<dbReference type="EMBL" id="AF310104">
    <property type="protein sequence ID" value="AAG30287.1"/>
    <property type="molecule type" value="mRNA"/>
</dbReference>
<dbReference type="EMBL" id="AK009852">
    <property type="protein sequence ID" value="BAB26543.1"/>
    <property type="molecule type" value="mRNA"/>
</dbReference>
<dbReference type="EMBL" id="AK007742">
    <property type="protein sequence ID" value="BAB25229.1"/>
    <property type="molecule type" value="mRNA"/>
</dbReference>
<dbReference type="EMBL" id="AK018682">
    <property type="protein sequence ID" value="BAB31341.1"/>
    <property type="molecule type" value="mRNA"/>
</dbReference>
<dbReference type="EMBL" id="BC008252">
    <property type="protein sequence ID" value="AAH08252.1"/>
    <property type="molecule type" value="mRNA"/>
</dbReference>
<dbReference type="CCDS" id="CCDS21888.1"/>
<dbReference type="RefSeq" id="NP_075747.3">
    <property type="nucleotide sequence ID" value="NM_023258.4"/>
</dbReference>
<dbReference type="PDB" id="2N1F">
    <property type="method" value="Other"/>
    <property type="resolution" value="4.00 A"/>
    <property type="chains" value="A/B/C/D/E/F/G/H/I/J/K/L/M/N/O=2-90"/>
</dbReference>
<dbReference type="PDBsum" id="2N1F"/>
<dbReference type="SMR" id="Q9EPB4"/>
<dbReference type="BioGRID" id="211743">
    <property type="interactions" value="8"/>
</dbReference>
<dbReference type="ComplexPortal" id="CPX-4241">
    <property type="entry name" value="NLRP3 inflammasome"/>
</dbReference>
<dbReference type="ComplexPortal" id="CPX-4243">
    <property type="entry name" value="AIM2 inflammasome"/>
</dbReference>
<dbReference type="ComplexPortal" id="CPX-4244">
    <property type="entry name" value="Pyrin inflammasome"/>
</dbReference>
<dbReference type="CORUM" id="Q9EPB4"/>
<dbReference type="DIP" id="DIP-27619N"/>
<dbReference type="FunCoup" id="Q9EPB4">
    <property type="interactions" value="280"/>
</dbReference>
<dbReference type="IntAct" id="Q9EPB4">
    <property type="interactions" value="11"/>
</dbReference>
<dbReference type="MINT" id="Q9EPB4"/>
<dbReference type="STRING" id="10090.ENSMUSP00000033056"/>
<dbReference type="ChEMBL" id="CHEMBL5169193"/>
<dbReference type="GlyGen" id="Q9EPB4">
    <property type="glycosylation" value="1 site, 1 N-linked glycan (1 site)"/>
</dbReference>
<dbReference type="iPTMnet" id="Q9EPB4"/>
<dbReference type="PhosphoSitePlus" id="Q9EPB4"/>
<dbReference type="CPTAC" id="non-CPTAC-3636"/>
<dbReference type="jPOST" id="Q9EPB4"/>
<dbReference type="PaxDb" id="10090-ENSMUSP00000033056"/>
<dbReference type="ProteomicsDB" id="277076"/>
<dbReference type="Antibodypedia" id="3375">
    <property type="antibodies" value="746 antibodies from 44 providers"/>
</dbReference>
<dbReference type="DNASU" id="66824"/>
<dbReference type="Ensembl" id="ENSMUST00000033056.5">
    <property type="protein sequence ID" value="ENSMUSP00000033056.4"/>
    <property type="gene ID" value="ENSMUSG00000030793.5"/>
</dbReference>
<dbReference type="GeneID" id="66824"/>
<dbReference type="KEGG" id="mmu:66824"/>
<dbReference type="UCSC" id="uc009jxu.2">
    <property type="organism name" value="mouse"/>
</dbReference>
<dbReference type="AGR" id="MGI:1931465"/>
<dbReference type="CTD" id="29108"/>
<dbReference type="MGI" id="MGI:1931465">
    <property type="gene designation" value="Pycard"/>
</dbReference>
<dbReference type="VEuPathDB" id="HostDB:ENSMUSG00000030793"/>
<dbReference type="eggNOG" id="ENOG502S3G5">
    <property type="taxonomic scope" value="Eukaryota"/>
</dbReference>
<dbReference type="GeneTree" id="ENSGT00940000161873"/>
<dbReference type="HOGENOM" id="CLU_113553_1_0_1"/>
<dbReference type="InParanoid" id="Q9EPB4"/>
<dbReference type="OMA" id="SRETNQA"/>
<dbReference type="OrthoDB" id="10058437at2759"/>
<dbReference type="PhylomeDB" id="Q9EPB4"/>
<dbReference type="TreeFam" id="TF337882"/>
<dbReference type="Reactome" id="R-MMU-5660668">
    <property type="pathway name" value="CLEC7A/inflammasome pathway"/>
</dbReference>
<dbReference type="Reactome" id="R-MMU-6798695">
    <property type="pathway name" value="Neutrophil degranulation"/>
</dbReference>
<dbReference type="Reactome" id="R-MMU-844456">
    <property type="pathway name" value="The NLRP3 inflammasome"/>
</dbReference>
<dbReference type="BioGRID-ORCS" id="66824">
    <property type="hits" value="0 hits in 78 CRISPR screens"/>
</dbReference>
<dbReference type="EvolutionaryTrace" id="Q9EPB4"/>
<dbReference type="PRO" id="PR:Q9EPB4"/>
<dbReference type="Proteomes" id="UP000000589">
    <property type="component" value="Chromosome 7"/>
</dbReference>
<dbReference type="RNAct" id="Q9EPB4">
    <property type="molecule type" value="protein"/>
</dbReference>
<dbReference type="Bgee" id="ENSMUSG00000030793">
    <property type="expression patterns" value="Expressed in paneth cell and 216 other cell types or tissues"/>
</dbReference>
<dbReference type="ExpressionAtlas" id="Q9EPB4">
    <property type="expression patterns" value="baseline and differential"/>
</dbReference>
<dbReference type="GO" id="GO:0097169">
    <property type="term" value="C:AIM2 inflammasome complex"/>
    <property type="evidence" value="ECO:0000250"/>
    <property type="project" value="UniProtKB"/>
</dbReference>
<dbReference type="GO" id="GO:0061702">
    <property type="term" value="C:canonical inflammasome complex"/>
    <property type="evidence" value="ECO:0000314"/>
    <property type="project" value="MGI"/>
</dbReference>
<dbReference type="GO" id="GO:0005737">
    <property type="term" value="C:cytoplasm"/>
    <property type="evidence" value="ECO:0000250"/>
    <property type="project" value="HGNC-UCL"/>
</dbReference>
<dbReference type="GO" id="GO:0005829">
    <property type="term" value="C:cytosol"/>
    <property type="evidence" value="ECO:0000314"/>
    <property type="project" value="MGI"/>
</dbReference>
<dbReference type="GO" id="GO:0005783">
    <property type="term" value="C:endoplasmic reticulum"/>
    <property type="evidence" value="ECO:0007669"/>
    <property type="project" value="UniProtKB-SubCell"/>
</dbReference>
<dbReference type="GO" id="GO:0005576">
    <property type="term" value="C:extracellular region"/>
    <property type="evidence" value="ECO:0000314"/>
    <property type="project" value="MGI"/>
</dbReference>
<dbReference type="GO" id="GO:0000139">
    <property type="term" value="C:Golgi membrane"/>
    <property type="evidence" value="ECO:0007669"/>
    <property type="project" value="Ensembl"/>
</dbReference>
<dbReference type="GO" id="GO:0008385">
    <property type="term" value="C:IkappaB kinase complex"/>
    <property type="evidence" value="ECO:0007669"/>
    <property type="project" value="Ensembl"/>
</dbReference>
<dbReference type="GO" id="GO:0005874">
    <property type="term" value="C:microtubule"/>
    <property type="evidence" value="ECO:0000303"/>
    <property type="project" value="ComplexPortal"/>
</dbReference>
<dbReference type="GO" id="GO:0005739">
    <property type="term" value="C:mitochondrion"/>
    <property type="evidence" value="ECO:0007669"/>
    <property type="project" value="UniProtKB-SubCell"/>
</dbReference>
<dbReference type="GO" id="GO:0043025">
    <property type="term" value="C:neuronal cell body"/>
    <property type="evidence" value="ECO:0007669"/>
    <property type="project" value="Ensembl"/>
</dbReference>
<dbReference type="GO" id="GO:0072558">
    <property type="term" value="C:NLRP1 inflammasome complex"/>
    <property type="evidence" value="ECO:0007669"/>
    <property type="project" value="Ensembl"/>
</dbReference>
<dbReference type="GO" id="GO:0072559">
    <property type="term" value="C:NLRP3 inflammasome complex"/>
    <property type="evidence" value="ECO:0000250"/>
    <property type="project" value="UniProtKB"/>
</dbReference>
<dbReference type="GO" id="GO:0140738">
    <property type="term" value="C:NLRP6 inflammasome complex"/>
    <property type="evidence" value="ECO:0000314"/>
    <property type="project" value="UniProtKB"/>
</dbReference>
<dbReference type="GO" id="GO:0005730">
    <property type="term" value="C:nucleolus"/>
    <property type="evidence" value="ECO:0007669"/>
    <property type="project" value="Ensembl"/>
</dbReference>
<dbReference type="GO" id="GO:0005654">
    <property type="term" value="C:nucleoplasm"/>
    <property type="evidence" value="ECO:0007669"/>
    <property type="project" value="Ensembl"/>
</dbReference>
<dbReference type="GO" id="GO:0005634">
    <property type="term" value="C:nucleus"/>
    <property type="evidence" value="ECO:0000314"/>
    <property type="project" value="UniProtKB"/>
</dbReference>
<dbReference type="GO" id="GO:0070700">
    <property type="term" value="F:BMP receptor binding"/>
    <property type="evidence" value="ECO:0007669"/>
    <property type="project" value="Ensembl"/>
</dbReference>
<dbReference type="GO" id="GO:0042802">
    <property type="term" value="F:identical protein binding"/>
    <property type="evidence" value="ECO:0000353"/>
    <property type="project" value="MGI"/>
</dbReference>
<dbReference type="GO" id="GO:0005138">
    <property type="term" value="F:interleukin-6 receptor binding"/>
    <property type="evidence" value="ECO:0007669"/>
    <property type="project" value="Ensembl"/>
</dbReference>
<dbReference type="GO" id="GO:0017024">
    <property type="term" value="F:myosin I binding"/>
    <property type="evidence" value="ECO:0007669"/>
    <property type="project" value="Ensembl"/>
</dbReference>
<dbReference type="GO" id="GO:0016505">
    <property type="term" value="F:peptidase activator activity involved in apoptotic process"/>
    <property type="evidence" value="ECO:0000266"/>
    <property type="project" value="MGI"/>
</dbReference>
<dbReference type="GO" id="GO:0002020">
    <property type="term" value="F:protease binding"/>
    <property type="evidence" value="ECO:0007669"/>
    <property type="project" value="Ensembl"/>
</dbReference>
<dbReference type="GO" id="GO:0046983">
    <property type="term" value="F:protein dimerization activity"/>
    <property type="evidence" value="ECO:0000315"/>
    <property type="project" value="AgBase"/>
</dbReference>
<dbReference type="GO" id="GO:0042803">
    <property type="term" value="F:protein homodimerization activity"/>
    <property type="evidence" value="ECO:0000250"/>
    <property type="project" value="HGNC-UCL"/>
</dbReference>
<dbReference type="GO" id="GO:0032090">
    <property type="term" value="F:Pyrin domain binding"/>
    <property type="evidence" value="ECO:0000250"/>
    <property type="project" value="HGNC-UCL"/>
</dbReference>
<dbReference type="GO" id="GO:0044325">
    <property type="term" value="F:transmembrane transporter binding"/>
    <property type="evidence" value="ECO:0007669"/>
    <property type="project" value="Ensembl"/>
</dbReference>
<dbReference type="GO" id="GO:0005523">
    <property type="term" value="F:tropomyosin binding"/>
    <property type="evidence" value="ECO:0007669"/>
    <property type="project" value="Ensembl"/>
</dbReference>
<dbReference type="GO" id="GO:0002218">
    <property type="term" value="P:activation of innate immune response"/>
    <property type="evidence" value="ECO:0000315"/>
    <property type="project" value="UniProtKB"/>
</dbReference>
<dbReference type="GO" id="GO:0006915">
    <property type="term" value="P:apoptotic process"/>
    <property type="evidence" value="ECO:0000266"/>
    <property type="project" value="MGI"/>
</dbReference>
<dbReference type="GO" id="GO:0071347">
    <property type="term" value="P:cellular response to interleukin-1"/>
    <property type="evidence" value="ECO:0007669"/>
    <property type="project" value="Ensembl"/>
</dbReference>
<dbReference type="GO" id="GO:0071222">
    <property type="term" value="P:cellular response to lipopolysaccharide"/>
    <property type="evidence" value="ECO:0007669"/>
    <property type="project" value="Ensembl"/>
</dbReference>
<dbReference type="GO" id="GO:0050829">
    <property type="term" value="P:defense response to Gram-negative bacterium"/>
    <property type="evidence" value="ECO:0007669"/>
    <property type="project" value="Ensembl"/>
</dbReference>
<dbReference type="GO" id="GO:0050830">
    <property type="term" value="P:defense response to Gram-positive bacterium"/>
    <property type="evidence" value="ECO:0000315"/>
    <property type="project" value="MGI"/>
</dbReference>
<dbReference type="GO" id="GO:0051607">
    <property type="term" value="P:defense response to virus"/>
    <property type="evidence" value="ECO:0000303"/>
    <property type="project" value="ComplexPortal"/>
</dbReference>
<dbReference type="GO" id="GO:0006954">
    <property type="term" value="P:inflammatory response"/>
    <property type="evidence" value="ECO:0000315"/>
    <property type="project" value="MGI"/>
</dbReference>
<dbReference type="GO" id="GO:0045087">
    <property type="term" value="P:innate immune response"/>
    <property type="evidence" value="ECO:0007669"/>
    <property type="project" value="UniProtKB-KW"/>
</dbReference>
<dbReference type="GO" id="GO:0042771">
    <property type="term" value="P:intrinsic apoptotic signaling pathway in response to DNA damage by p53 class mediator"/>
    <property type="evidence" value="ECO:0007669"/>
    <property type="project" value="Ensembl"/>
</dbReference>
<dbReference type="GO" id="GO:0044351">
    <property type="term" value="P:macropinocytosis"/>
    <property type="evidence" value="ECO:0000315"/>
    <property type="project" value="UniProtKB"/>
</dbReference>
<dbReference type="GO" id="GO:0002277">
    <property type="term" value="P:myeloid dendritic cell activation involved in immune response"/>
    <property type="evidence" value="ECO:0000315"/>
    <property type="project" value="UniProtKB"/>
</dbReference>
<dbReference type="GO" id="GO:0043124">
    <property type="term" value="P:negative regulation of canonical NF-kappaB signal transduction"/>
    <property type="evidence" value="ECO:0007669"/>
    <property type="project" value="Ensembl"/>
</dbReference>
<dbReference type="GO" id="GO:1900016">
    <property type="term" value="P:negative regulation of cytokine production involved in inflammatory response"/>
    <property type="evidence" value="ECO:0000250"/>
    <property type="project" value="UniProtKB"/>
</dbReference>
<dbReference type="GO" id="GO:0032688">
    <property type="term" value="P:negative regulation of interferon-beta production"/>
    <property type="evidence" value="ECO:0007669"/>
    <property type="project" value="Ensembl"/>
</dbReference>
<dbReference type="GO" id="GO:0044546">
    <property type="term" value="P:NLRP3 inflammasome complex assembly"/>
    <property type="evidence" value="ECO:0007669"/>
    <property type="project" value="Ensembl"/>
</dbReference>
<dbReference type="GO" id="GO:0007231">
    <property type="term" value="P:osmosensory signaling pathway"/>
    <property type="evidence" value="ECO:0000303"/>
    <property type="project" value="ComplexPortal"/>
</dbReference>
<dbReference type="GO" id="GO:0002221">
    <property type="term" value="P:pattern recognition receptor signaling pathway"/>
    <property type="evidence" value="ECO:0000303"/>
    <property type="project" value="ComplexPortal"/>
</dbReference>
<dbReference type="GO" id="GO:0030838">
    <property type="term" value="P:positive regulation of actin filament polymerization"/>
    <property type="evidence" value="ECO:0000315"/>
    <property type="project" value="UniProtKB"/>
</dbReference>
<dbReference type="GO" id="GO:0042104">
    <property type="term" value="P:positive regulation of activated T cell proliferation"/>
    <property type="evidence" value="ECO:0000315"/>
    <property type="project" value="UniProtKB"/>
</dbReference>
<dbReference type="GO" id="GO:0002821">
    <property type="term" value="P:positive regulation of adaptive immune response"/>
    <property type="evidence" value="ECO:0007669"/>
    <property type="project" value="Ensembl"/>
</dbReference>
<dbReference type="GO" id="GO:0002588">
    <property type="term" value="P:positive regulation of antigen processing and presentation of peptide antigen via MHC class II"/>
    <property type="evidence" value="ECO:0000315"/>
    <property type="project" value="UniProtKB"/>
</dbReference>
<dbReference type="GO" id="GO:0043123">
    <property type="term" value="P:positive regulation of canonical NF-kappaB signal transduction"/>
    <property type="evidence" value="ECO:0007669"/>
    <property type="project" value="Ensembl"/>
</dbReference>
<dbReference type="GO" id="GO:0032722">
    <property type="term" value="P:positive regulation of chemokine production"/>
    <property type="evidence" value="ECO:0000315"/>
    <property type="project" value="UniProtKB"/>
</dbReference>
<dbReference type="GO" id="GO:0002230">
    <property type="term" value="P:positive regulation of defense response to virus by host"/>
    <property type="evidence" value="ECO:0000315"/>
    <property type="project" value="UniProtKB"/>
</dbReference>
<dbReference type="GO" id="GO:0070374">
    <property type="term" value="P:positive regulation of ERK1 and ERK2 cascade"/>
    <property type="evidence" value="ECO:0000315"/>
    <property type="project" value="UniProtKB"/>
</dbReference>
<dbReference type="GO" id="GO:2001238">
    <property type="term" value="P:positive regulation of extrinsic apoptotic signaling pathway"/>
    <property type="evidence" value="ECO:0007669"/>
    <property type="project" value="Ensembl"/>
</dbReference>
<dbReference type="GO" id="GO:0050729">
    <property type="term" value="P:positive regulation of inflammatory response"/>
    <property type="evidence" value="ECO:0000314"/>
    <property type="project" value="ComplexPortal"/>
</dbReference>
<dbReference type="GO" id="GO:0032731">
    <property type="term" value="P:positive regulation of interleukin-1 beta production"/>
    <property type="evidence" value="ECO:0000314"/>
    <property type="project" value="ComplexPortal"/>
</dbReference>
<dbReference type="GO" id="GO:0032733">
    <property type="term" value="P:positive regulation of interleukin-10 production"/>
    <property type="evidence" value="ECO:0007669"/>
    <property type="project" value="Ensembl"/>
</dbReference>
<dbReference type="GO" id="GO:0032755">
    <property type="term" value="P:positive regulation of interleukin-6 production"/>
    <property type="evidence" value="ECO:0000315"/>
    <property type="project" value="UniProtKB"/>
</dbReference>
<dbReference type="GO" id="GO:0032757">
    <property type="term" value="P:positive regulation of interleukin-8 production"/>
    <property type="evidence" value="ECO:0007669"/>
    <property type="project" value="Ensembl"/>
</dbReference>
<dbReference type="GO" id="GO:0046330">
    <property type="term" value="P:positive regulation of JNK cascade"/>
    <property type="evidence" value="ECO:0007669"/>
    <property type="project" value="Ensembl"/>
</dbReference>
<dbReference type="GO" id="GO:0060907">
    <property type="term" value="P:positive regulation of macrophage cytokine production"/>
    <property type="evidence" value="ECO:0000316"/>
    <property type="project" value="MGI"/>
</dbReference>
<dbReference type="GO" id="GO:1901224">
    <property type="term" value="P:positive regulation of non-canonical NF-kappaB signal transduction"/>
    <property type="evidence" value="ECO:0007669"/>
    <property type="project" value="Ensembl"/>
</dbReference>
<dbReference type="GO" id="GO:0050766">
    <property type="term" value="P:positive regulation of phagocytosis"/>
    <property type="evidence" value="ECO:0000315"/>
    <property type="project" value="UniProtKB"/>
</dbReference>
<dbReference type="GO" id="GO:0090200">
    <property type="term" value="P:positive regulation of release of cytochrome c from mitochondria"/>
    <property type="evidence" value="ECO:0007669"/>
    <property type="project" value="Ensembl"/>
</dbReference>
<dbReference type="GO" id="GO:2000406">
    <property type="term" value="P:positive regulation of T cell migration"/>
    <property type="evidence" value="ECO:0000315"/>
    <property type="project" value="UniProtKB"/>
</dbReference>
<dbReference type="GO" id="GO:0032760">
    <property type="term" value="P:positive regulation of tumor necrosis factor production"/>
    <property type="evidence" value="ECO:0007669"/>
    <property type="project" value="Ensembl"/>
</dbReference>
<dbReference type="GO" id="GO:0032729">
    <property type="term" value="P:positive regulation of type II interferon production"/>
    <property type="evidence" value="ECO:0000315"/>
    <property type="project" value="UniProtKB"/>
</dbReference>
<dbReference type="GO" id="GO:0051260">
    <property type="term" value="P:protein homooligomerization"/>
    <property type="evidence" value="ECO:0000250"/>
    <property type="project" value="UniProtKB"/>
</dbReference>
<dbReference type="GO" id="GO:0070269">
    <property type="term" value="P:pyroptotic inflammatory response"/>
    <property type="evidence" value="ECO:0000303"/>
    <property type="project" value="ComplexPortal"/>
</dbReference>
<dbReference type="GO" id="GO:0042981">
    <property type="term" value="P:regulation of apoptotic process"/>
    <property type="evidence" value="ECO:0000315"/>
    <property type="project" value="MGI"/>
</dbReference>
<dbReference type="GO" id="GO:0010506">
    <property type="term" value="P:regulation of autophagy"/>
    <property type="evidence" value="ECO:0000315"/>
    <property type="project" value="MGI"/>
</dbReference>
<dbReference type="GO" id="GO:0043087">
    <property type="term" value="P:regulation of GTPase activity"/>
    <property type="evidence" value="ECO:0000315"/>
    <property type="project" value="UniProtKB"/>
</dbReference>
<dbReference type="GO" id="GO:0050727">
    <property type="term" value="P:regulation of inflammatory response"/>
    <property type="evidence" value="ECO:0000315"/>
    <property type="project" value="MGI"/>
</dbReference>
<dbReference type="GO" id="GO:2001242">
    <property type="term" value="P:regulation of intrinsic apoptotic signaling pathway"/>
    <property type="evidence" value="ECO:0007669"/>
    <property type="project" value="Ensembl"/>
</dbReference>
<dbReference type="GO" id="GO:0031647">
    <property type="term" value="P:regulation of protein stability"/>
    <property type="evidence" value="ECO:0000315"/>
    <property type="project" value="UniProtKB"/>
</dbReference>
<dbReference type="GO" id="GO:0010803">
    <property type="term" value="P:regulation of tumor necrosis factor-mediated signaling pathway"/>
    <property type="evidence" value="ECO:0007669"/>
    <property type="project" value="Ensembl"/>
</dbReference>
<dbReference type="GO" id="GO:0009617">
    <property type="term" value="P:response to bacterium"/>
    <property type="evidence" value="ECO:0000315"/>
    <property type="project" value="MGI"/>
</dbReference>
<dbReference type="GO" id="GO:0033209">
    <property type="term" value="P:tumor necrosis factor-mediated signaling pathway"/>
    <property type="evidence" value="ECO:0007669"/>
    <property type="project" value="Ensembl"/>
</dbReference>
<dbReference type="CDD" id="cd08330">
    <property type="entry name" value="CARD_ASC_NALP1"/>
    <property type="match status" value="1"/>
</dbReference>
<dbReference type="CDD" id="cd08321">
    <property type="entry name" value="Pyrin_ASC-like"/>
    <property type="match status" value="1"/>
</dbReference>
<dbReference type="FunFam" id="1.10.533.10:FF:000013">
    <property type="entry name" value="Apoptosis-associated speck-like protein containing a CARD"/>
    <property type="match status" value="1"/>
</dbReference>
<dbReference type="FunFam" id="1.10.533.10:FF:000053">
    <property type="entry name" value="Apoptosis-associated speck-like protein containing a CARD"/>
    <property type="match status" value="1"/>
</dbReference>
<dbReference type="Gene3D" id="1.10.533.10">
    <property type="entry name" value="Death Domain, Fas"/>
    <property type="match status" value="2"/>
</dbReference>
<dbReference type="InterPro" id="IPR001315">
    <property type="entry name" value="CARD"/>
</dbReference>
<dbReference type="InterPro" id="IPR033516">
    <property type="entry name" value="CARD8/ASC/NALP1_CARD"/>
</dbReference>
<dbReference type="InterPro" id="IPR004020">
    <property type="entry name" value="DAPIN"/>
</dbReference>
<dbReference type="InterPro" id="IPR011029">
    <property type="entry name" value="DEATH-like_dom_sf"/>
</dbReference>
<dbReference type="InterPro" id="IPR051249">
    <property type="entry name" value="NLRP_Inflammasome"/>
</dbReference>
<dbReference type="PANTHER" id="PTHR46985:SF2">
    <property type="entry name" value="APOPTOSIS-ASSOCIATED SPECK-LIKE PROTEIN CONTAINING A CARD"/>
    <property type="match status" value="1"/>
</dbReference>
<dbReference type="PANTHER" id="PTHR46985">
    <property type="entry name" value="NACHT, LRR AND PYD DOMAINS-CONTAINING PROTEIN 1"/>
    <property type="match status" value="1"/>
</dbReference>
<dbReference type="Pfam" id="PF00619">
    <property type="entry name" value="CARD"/>
    <property type="match status" value="1"/>
</dbReference>
<dbReference type="Pfam" id="PF02758">
    <property type="entry name" value="PYRIN"/>
    <property type="match status" value="1"/>
</dbReference>
<dbReference type="SMART" id="SM01289">
    <property type="entry name" value="PYRIN"/>
    <property type="match status" value="1"/>
</dbReference>
<dbReference type="SUPFAM" id="SSF47986">
    <property type="entry name" value="DEATH domain"/>
    <property type="match status" value="2"/>
</dbReference>
<dbReference type="PROSITE" id="PS50209">
    <property type="entry name" value="CARD"/>
    <property type="match status" value="1"/>
</dbReference>
<dbReference type="PROSITE" id="PS50824">
    <property type="entry name" value="DAPIN"/>
    <property type="match status" value="1"/>
</dbReference>
<organism>
    <name type="scientific">Mus musculus</name>
    <name type="common">Mouse</name>
    <dbReference type="NCBI Taxonomy" id="10090"/>
    <lineage>
        <taxon>Eukaryota</taxon>
        <taxon>Metazoa</taxon>
        <taxon>Chordata</taxon>
        <taxon>Craniata</taxon>
        <taxon>Vertebrata</taxon>
        <taxon>Euteleostomi</taxon>
        <taxon>Mammalia</taxon>
        <taxon>Eutheria</taxon>
        <taxon>Euarchontoglires</taxon>
        <taxon>Glires</taxon>
        <taxon>Rodentia</taxon>
        <taxon>Myomorpha</taxon>
        <taxon>Muroidea</taxon>
        <taxon>Muridae</taxon>
        <taxon>Murinae</taxon>
        <taxon>Mus</taxon>
        <taxon>Mus</taxon>
    </lineage>
</organism>
<reference key="1">
    <citation type="journal article" date="2001" name="Exp. Cell Res.">
        <title>Murine ortholog of ASC, a CARD-containing protein, self-associates and exhibits restricted distribution in developing mouse embryos.</title>
        <authorList>
            <person name="Masumoto J."/>
            <person name="Taniguchi S."/>
            <person name="Nakayama K."/>
            <person name="Ayukawa K."/>
            <person name="Sagara J."/>
        </authorList>
    </citation>
    <scope>NUCLEOTIDE SEQUENCE [MRNA]</scope>
    <scope>SUBCELLULAR LOCATION</scope>
    <source>
        <strain>BALB/cJ</strain>
        <tissue>Thymus</tissue>
    </source>
</reference>
<reference key="2">
    <citation type="submission" date="2000-09" db="EMBL/GenBank/DDBJ databases">
        <title>Pycard a PYD and CARD containing molecule.</title>
        <authorList>
            <person name="Martinon F."/>
            <person name="Hofmann K."/>
            <person name="Tschopp J."/>
        </authorList>
    </citation>
    <scope>NUCLEOTIDE SEQUENCE [MRNA]</scope>
    <source>
        <strain>FVB/N</strain>
        <tissue>Mammary tumor</tissue>
    </source>
</reference>
<reference key="3">
    <citation type="journal article" date="2005" name="Science">
        <title>The transcriptional landscape of the mammalian genome.</title>
        <authorList>
            <person name="Carninci P."/>
            <person name="Kasukawa T."/>
            <person name="Katayama S."/>
            <person name="Gough J."/>
            <person name="Frith M.C."/>
            <person name="Maeda N."/>
            <person name="Oyama R."/>
            <person name="Ravasi T."/>
            <person name="Lenhard B."/>
            <person name="Wells C."/>
            <person name="Kodzius R."/>
            <person name="Shimokawa K."/>
            <person name="Bajic V.B."/>
            <person name="Brenner S.E."/>
            <person name="Batalov S."/>
            <person name="Forrest A.R."/>
            <person name="Zavolan M."/>
            <person name="Davis M.J."/>
            <person name="Wilming L.G."/>
            <person name="Aidinis V."/>
            <person name="Allen J.E."/>
            <person name="Ambesi-Impiombato A."/>
            <person name="Apweiler R."/>
            <person name="Aturaliya R.N."/>
            <person name="Bailey T.L."/>
            <person name="Bansal M."/>
            <person name="Baxter L."/>
            <person name="Beisel K.W."/>
            <person name="Bersano T."/>
            <person name="Bono H."/>
            <person name="Chalk A.M."/>
            <person name="Chiu K.P."/>
            <person name="Choudhary V."/>
            <person name="Christoffels A."/>
            <person name="Clutterbuck D.R."/>
            <person name="Crowe M.L."/>
            <person name="Dalla E."/>
            <person name="Dalrymple B.P."/>
            <person name="de Bono B."/>
            <person name="Della Gatta G."/>
            <person name="di Bernardo D."/>
            <person name="Down T."/>
            <person name="Engstrom P."/>
            <person name="Fagiolini M."/>
            <person name="Faulkner G."/>
            <person name="Fletcher C.F."/>
            <person name="Fukushima T."/>
            <person name="Furuno M."/>
            <person name="Futaki S."/>
            <person name="Gariboldi M."/>
            <person name="Georgii-Hemming P."/>
            <person name="Gingeras T.R."/>
            <person name="Gojobori T."/>
            <person name="Green R.E."/>
            <person name="Gustincich S."/>
            <person name="Harbers M."/>
            <person name="Hayashi Y."/>
            <person name="Hensch T.K."/>
            <person name="Hirokawa N."/>
            <person name="Hill D."/>
            <person name="Huminiecki L."/>
            <person name="Iacono M."/>
            <person name="Ikeo K."/>
            <person name="Iwama A."/>
            <person name="Ishikawa T."/>
            <person name="Jakt M."/>
            <person name="Kanapin A."/>
            <person name="Katoh M."/>
            <person name="Kawasawa Y."/>
            <person name="Kelso J."/>
            <person name="Kitamura H."/>
            <person name="Kitano H."/>
            <person name="Kollias G."/>
            <person name="Krishnan S.P."/>
            <person name="Kruger A."/>
            <person name="Kummerfeld S.K."/>
            <person name="Kurochkin I.V."/>
            <person name="Lareau L.F."/>
            <person name="Lazarevic D."/>
            <person name="Lipovich L."/>
            <person name="Liu J."/>
            <person name="Liuni S."/>
            <person name="McWilliam S."/>
            <person name="Madan Babu M."/>
            <person name="Madera M."/>
            <person name="Marchionni L."/>
            <person name="Matsuda H."/>
            <person name="Matsuzawa S."/>
            <person name="Miki H."/>
            <person name="Mignone F."/>
            <person name="Miyake S."/>
            <person name="Morris K."/>
            <person name="Mottagui-Tabar S."/>
            <person name="Mulder N."/>
            <person name="Nakano N."/>
            <person name="Nakauchi H."/>
            <person name="Ng P."/>
            <person name="Nilsson R."/>
            <person name="Nishiguchi S."/>
            <person name="Nishikawa S."/>
            <person name="Nori F."/>
            <person name="Ohara O."/>
            <person name="Okazaki Y."/>
            <person name="Orlando V."/>
            <person name="Pang K.C."/>
            <person name="Pavan W.J."/>
            <person name="Pavesi G."/>
            <person name="Pesole G."/>
            <person name="Petrovsky N."/>
            <person name="Piazza S."/>
            <person name="Reed J."/>
            <person name="Reid J.F."/>
            <person name="Ring B.Z."/>
            <person name="Ringwald M."/>
            <person name="Rost B."/>
            <person name="Ruan Y."/>
            <person name="Salzberg S.L."/>
            <person name="Sandelin A."/>
            <person name="Schneider C."/>
            <person name="Schoenbach C."/>
            <person name="Sekiguchi K."/>
            <person name="Semple C.A."/>
            <person name="Seno S."/>
            <person name="Sessa L."/>
            <person name="Sheng Y."/>
            <person name="Shibata Y."/>
            <person name="Shimada H."/>
            <person name="Shimada K."/>
            <person name="Silva D."/>
            <person name="Sinclair B."/>
            <person name="Sperling S."/>
            <person name="Stupka E."/>
            <person name="Sugiura K."/>
            <person name="Sultana R."/>
            <person name="Takenaka Y."/>
            <person name="Taki K."/>
            <person name="Tammoja K."/>
            <person name="Tan S.L."/>
            <person name="Tang S."/>
            <person name="Taylor M.S."/>
            <person name="Tegner J."/>
            <person name="Teichmann S.A."/>
            <person name="Ueda H.R."/>
            <person name="van Nimwegen E."/>
            <person name="Verardo R."/>
            <person name="Wei C.L."/>
            <person name="Yagi K."/>
            <person name="Yamanishi H."/>
            <person name="Zabarovsky E."/>
            <person name="Zhu S."/>
            <person name="Zimmer A."/>
            <person name="Hide W."/>
            <person name="Bult C."/>
            <person name="Grimmond S.M."/>
            <person name="Teasdale R.D."/>
            <person name="Liu E.T."/>
            <person name="Brusic V."/>
            <person name="Quackenbush J."/>
            <person name="Wahlestedt C."/>
            <person name="Mattick J.S."/>
            <person name="Hume D.A."/>
            <person name="Kai C."/>
            <person name="Sasaki D."/>
            <person name="Tomaru Y."/>
            <person name="Fukuda S."/>
            <person name="Kanamori-Katayama M."/>
            <person name="Suzuki M."/>
            <person name="Aoki J."/>
            <person name="Arakawa T."/>
            <person name="Iida J."/>
            <person name="Imamura K."/>
            <person name="Itoh M."/>
            <person name="Kato T."/>
            <person name="Kawaji H."/>
            <person name="Kawagashira N."/>
            <person name="Kawashima T."/>
            <person name="Kojima M."/>
            <person name="Kondo S."/>
            <person name="Konno H."/>
            <person name="Nakano K."/>
            <person name="Ninomiya N."/>
            <person name="Nishio T."/>
            <person name="Okada M."/>
            <person name="Plessy C."/>
            <person name="Shibata K."/>
            <person name="Shiraki T."/>
            <person name="Suzuki S."/>
            <person name="Tagami M."/>
            <person name="Waki K."/>
            <person name="Watahiki A."/>
            <person name="Okamura-Oho Y."/>
            <person name="Suzuki H."/>
            <person name="Kawai J."/>
            <person name="Hayashizaki Y."/>
        </authorList>
    </citation>
    <scope>NUCLEOTIDE SEQUENCE [LARGE SCALE MRNA]</scope>
    <source>
        <strain>C57BL/6J</strain>
        <tissue>Pancreas</tissue>
        <tissue>Tongue</tissue>
    </source>
</reference>
<reference key="4">
    <citation type="journal article" date="2004" name="Genome Res.">
        <title>The status, quality, and expansion of the NIH full-length cDNA project: the Mammalian Gene Collection (MGC).</title>
        <authorList>
            <consortium name="The MGC Project Team"/>
        </authorList>
    </citation>
    <scope>NUCLEOTIDE SEQUENCE [LARGE SCALE MRNA]</scope>
</reference>
<reference key="5">
    <citation type="journal article" date="2004" name="Genes Cells">
        <title>ASC is essential for LPS-induced activation of procaspase-1 independently of TLR-associated signal adaptor molecules.</title>
        <authorList>
            <person name="Yamamoto M."/>
            <person name="Yaginuma K."/>
            <person name="Tsutsui H."/>
            <person name="Sagara J."/>
            <person name="Guan X."/>
            <person name="Seki E."/>
            <person name="Yasuda K."/>
            <person name="Yamamoto M."/>
            <person name="Akira S."/>
            <person name="Nakanishi K."/>
            <person name="Noda T."/>
            <person name="Taniguchi S."/>
        </authorList>
    </citation>
    <scope>FUNCTION</scope>
    <scope>DISRUPTION PHENOTYPE</scope>
</reference>
<reference key="6">
    <citation type="journal article" date="2004" name="Nature">
        <title>Differential activation of the inflammasome by caspase-1 adaptors ASC and Ipaf.</title>
        <authorList>
            <person name="Mariathasan S."/>
            <person name="Newton K."/>
            <person name="Monack D.M."/>
            <person name="Vucic D."/>
            <person name="French D.M."/>
            <person name="Lee W.P."/>
            <person name="Roose-Girma M."/>
            <person name="Erickson S."/>
            <person name="Dixit V.M."/>
        </authorList>
    </citation>
    <scope>FUNCTION</scope>
    <scope>DISRUPTION PHENOTYPE</scope>
</reference>
<reference key="7">
    <citation type="journal article" date="2010" name="Cell">
        <title>A tissue-specific atlas of mouse protein phosphorylation and expression.</title>
        <authorList>
            <person name="Huttlin E.L."/>
            <person name="Jedrychowski M.P."/>
            <person name="Elias J.E."/>
            <person name="Goswami T."/>
            <person name="Rad R."/>
            <person name="Beausoleil S.A."/>
            <person name="Villen J."/>
            <person name="Haas W."/>
            <person name="Sowa M.E."/>
            <person name="Gygi S.P."/>
        </authorList>
    </citation>
    <scope>PHOSPHORYLATION [LARGE SCALE ANALYSIS] AT SER-193</scope>
    <scope>IDENTIFICATION BY MASS SPECTROMETRY [LARGE SCALE ANALYSIS]</scope>
    <source>
        <tissue>Brain</tissue>
        <tissue>Heart</tissue>
        <tissue>Kidney</tissue>
        <tissue>Liver</tissue>
        <tissue>Lung</tissue>
        <tissue>Pancreas</tissue>
        <tissue>Spleen</tissue>
        <tissue>Testis</tissue>
    </source>
</reference>
<reference key="8">
    <citation type="journal article" date="2011" name="Nat. Immunol.">
        <title>The inflammasome adaptor ASC regulates the function of adaptive immune cells by controlling Dock2-mediated Rac activation and actin polymerization.</title>
        <authorList>
            <person name="Ippagunta S.K."/>
            <person name="Malireddi R.K."/>
            <person name="Shaw P.J."/>
            <person name="Neale G.A."/>
            <person name="Walle L.V."/>
            <person name="Green D.R."/>
            <person name="Fukui Y."/>
            <person name="Lamkanfi M."/>
            <person name="Kanneganti T.D."/>
        </authorList>
    </citation>
    <scope>FUNCTION</scope>
    <scope>SUBCELLULAR LOCATION</scope>
</reference>
<reference key="9">
    <citation type="journal article" date="2012" name="Cell Death Differ.">
        <title>AIM2/ASC triggers caspase-8-dependent apoptosis in Francisella-infected caspase-1-deficient macrophages.</title>
        <authorList>
            <person name="Pierini R."/>
            <person name="Juruj C."/>
            <person name="Perret M."/>
            <person name="Jones C.L."/>
            <person name="Mangeot P."/>
            <person name="Weiss D.S."/>
            <person name="Henry T."/>
        </authorList>
    </citation>
    <scope>FUNCTION</scope>
    <scope>SUBCELLULAR LOCATION</scope>
    <scope>INTERACTION WITH CASP8</scope>
</reference>
<reference key="10">
    <citation type="journal article" date="2017" name="Immunity">
        <title>Inflammasome activation triggers caspase-1-mediated cleavage of cGAS to regulate responses to DNA virus infection.</title>
        <authorList>
            <person name="Wang Y."/>
            <person name="Ning X."/>
            <person name="Gao P."/>
            <person name="Wu S."/>
            <person name="Sha M."/>
            <person name="Lv M."/>
            <person name="Zhou X."/>
            <person name="Gao J."/>
            <person name="Fang R."/>
            <person name="Meng G."/>
            <person name="Su X."/>
            <person name="Jiang Z."/>
        </authorList>
    </citation>
    <scope>FUNCTION</scope>
    <scope>DISRUPTION PHENOTYPE</scope>
</reference>
<reference key="11">
    <citation type="journal article" date="2018" name="Nature">
        <title>PtdIns4P on dispersed trans-Golgi network mediates NLRP3 inflammasome activation.</title>
        <authorList>
            <person name="Chen J."/>
            <person name="Chen Z.J."/>
        </authorList>
    </citation>
    <scope>INTERACTION WITH NLRP3</scope>
</reference>
<reference key="12">
    <citation type="journal article" date="2020" name="Nat. Immunol.">
        <title>Deubiquitination of NLRP6 inflammasome by Cyld critically regulates intestinal inflammation.</title>
        <authorList>
            <person name="Mukherjee S."/>
            <person name="Kumar R."/>
            <person name="Tsakem Lenou E."/>
            <person name="Basrur V."/>
            <person name="Kontoyiannis D.L."/>
            <person name="Ioakeimidis F."/>
            <person name="Mosialos G."/>
            <person name="Theiss A.L."/>
            <person name="Flavell R.A."/>
            <person name="Venuprasad K."/>
        </authorList>
    </citation>
    <scope>FUNCTION</scope>
    <scope>SUBCELLULAR LOCATION</scope>
    <scope>INTERACTION WITH NLRP6</scope>
</reference>
<reference key="13">
    <citation type="journal article" date="2021" name="Cell">
        <title>Phase separation drives RNA virus-induced activation of the NLRP6 inflammasome.</title>
        <authorList>
            <person name="Shen C."/>
            <person name="Li R."/>
            <person name="Negro R."/>
            <person name="Cheng J."/>
            <person name="Vora S.M."/>
            <person name="Fu T.M."/>
            <person name="Wang A."/>
            <person name="He K."/>
            <person name="Andreeva L."/>
            <person name="Gao P."/>
            <person name="Tian Z."/>
            <person name="Flavell R.A."/>
            <person name="Zhu S."/>
            <person name="Wu H."/>
        </authorList>
    </citation>
    <scope>FUNCTION</scope>
    <scope>SUBCELLULAR LOCATION</scope>
    <scope>INTERACTION WITH NLRP6</scope>
</reference>
<reference key="14">
    <citation type="journal article" date="2021" name="Nature">
        <title>AIM2 forms a complex with pyrin and ZBP1 to drive PANoptosis and host defence.</title>
        <authorList>
            <person name="Lee S."/>
            <person name="Karki R."/>
            <person name="Wang Y."/>
            <person name="Nguyen L.N."/>
            <person name="Kalathur R.C."/>
            <person name="Kanneganti T.D."/>
        </authorList>
    </citation>
    <scope>IDENTIFICATION IN THE AIM2 PANOPTOSOME COMPLEX</scope>
</reference>
<keyword id="KW-0002">3D-structure</keyword>
<keyword id="KW-0053">Apoptosis</keyword>
<keyword id="KW-0963">Cytoplasm</keyword>
<keyword id="KW-0256">Endoplasmic reticulum</keyword>
<keyword id="KW-0391">Immunity</keyword>
<keyword id="KW-1271">Inflammasome</keyword>
<keyword id="KW-0395">Inflammatory response</keyword>
<keyword id="KW-0399">Innate immunity</keyword>
<keyword id="KW-1017">Isopeptide bond</keyword>
<keyword id="KW-0496">Mitochondrion</keyword>
<keyword id="KW-0539">Nucleus</keyword>
<keyword id="KW-0597">Phosphoprotein</keyword>
<keyword id="KW-1185">Reference proteome</keyword>
<keyword id="KW-0043">Tumor suppressor</keyword>
<keyword id="KW-0832">Ubl conjugation</keyword>